<feature type="chain" id="PRO_1000188231" description="Pyridoxal 5'-phosphate synthase subunit PdxS">
    <location>
        <begin position="1"/>
        <end position="335"/>
    </location>
</feature>
<feature type="active site" description="Schiff-base intermediate with D-ribose 5-phosphate" evidence="1">
    <location>
        <position position="116"/>
    </location>
</feature>
<feature type="binding site" evidence="1">
    <location>
        <position position="59"/>
    </location>
    <ligand>
        <name>D-ribose 5-phosphate</name>
        <dbReference type="ChEBI" id="CHEBI:78346"/>
    </ligand>
</feature>
<feature type="binding site" evidence="1">
    <location>
        <position position="188"/>
    </location>
    <ligand>
        <name>D-ribose 5-phosphate</name>
        <dbReference type="ChEBI" id="CHEBI:78346"/>
    </ligand>
</feature>
<feature type="binding site" evidence="1">
    <location>
        <position position="200"/>
    </location>
    <ligand>
        <name>D-glyceraldehyde 3-phosphate</name>
        <dbReference type="ChEBI" id="CHEBI:59776"/>
    </ligand>
</feature>
<feature type="binding site" evidence="1">
    <location>
        <position position="253"/>
    </location>
    <ligand>
        <name>D-ribose 5-phosphate</name>
        <dbReference type="ChEBI" id="CHEBI:78346"/>
    </ligand>
</feature>
<feature type="binding site" evidence="1">
    <location>
        <begin position="274"/>
        <end position="275"/>
    </location>
    <ligand>
        <name>D-ribose 5-phosphate</name>
        <dbReference type="ChEBI" id="CHEBI:78346"/>
    </ligand>
</feature>
<evidence type="ECO:0000255" key="1">
    <source>
        <dbReference type="HAMAP-Rule" id="MF_01824"/>
    </source>
</evidence>
<proteinExistence type="inferred from homology"/>
<reference key="1">
    <citation type="journal article" date="2007" name="Archaea">
        <title>The genome of Hyperthermus butylicus: a sulfur-reducing, peptide fermenting, neutrophilic Crenarchaeote growing up to 108 degrees C.</title>
        <authorList>
            <person name="Bruegger K."/>
            <person name="Chen L."/>
            <person name="Stark M."/>
            <person name="Zibat A."/>
            <person name="Redder P."/>
            <person name="Ruepp A."/>
            <person name="Awayez M."/>
            <person name="She Q."/>
            <person name="Garrett R.A."/>
            <person name="Klenk H.-P."/>
        </authorList>
    </citation>
    <scope>NUCLEOTIDE SEQUENCE [LARGE SCALE GENOMIC DNA]</scope>
    <source>
        <strain>DSM 5456 / JCM 9403 / PLM1-5</strain>
    </source>
</reference>
<gene>
    <name evidence="1" type="primary">pdxS</name>
    <name type="ordered locus">Hbut_1032</name>
</gene>
<dbReference type="EC" id="4.3.3.6" evidence="1"/>
<dbReference type="EMBL" id="CP000493">
    <property type="protein sequence ID" value="ABM80876.1"/>
    <property type="molecule type" value="Genomic_DNA"/>
</dbReference>
<dbReference type="RefSeq" id="WP_011822194.1">
    <property type="nucleotide sequence ID" value="NC_008818.1"/>
</dbReference>
<dbReference type="SMR" id="A2BLL5"/>
<dbReference type="STRING" id="415426.Hbut_1032"/>
<dbReference type="EnsemblBacteria" id="ABM80876">
    <property type="protein sequence ID" value="ABM80876"/>
    <property type="gene ID" value="Hbut_1032"/>
</dbReference>
<dbReference type="GeneID" id="4781874"/>
<dbReference type="KEGG" id="hbu:Hbut_1032"/>
<dbReference type="eggNOG" id="arCOG04075">
    <property type="taxonomic scope" value="Archaea"/>
</dbReference>
<dbReference type="HOGENOM" id="CLU_055352_1_0_2"/>
<dbReference type="OrthoDB" id="6840at2157"/>
<dbReference type="UniPathway" id="UPA00245"/>
<dbReference type="Proteomes" id="UP000002593">
    <property type="component" value="Chromosome"/>
</dbReference>
<dbReference type="GO" id="GO:0036381">
    <property type="term" value="F:pyridoxal 5'-phosphate synthase (glutamine hydrolysing) activity"/>
    <property type="evidence" value="ECO:0007669"/>
    <property type="project" value="UniProtKB-UniRule"/>
</dbReference>
<dbReference type="GO" id="GO:0006520">
    <property type="term" value="P:amino acid metabolic process"/>
    <property type="evidence" value="ECO:0007669"/>
    <property type="project" value="TreeGrafter"/>
</dbReference>
<dbReference type="GO" id="GO:0042823">
    <property type="term" value="P:pyridoxal phosphate biosynthetic process"/>
    <property type="evidence" value="ECO:0007669"/>
    <property type="project" value="UniProtKB-UniRule"/>
</dbReference>
<dbReference type="GO" id="GO:0008615">
    <property type="term" value="P:pyridoxine biosynthetic process"/>
    <property type="evidence" value="ECO:0007669"/>
    <property type="project" value="TreeGrafter"/>
</dbReference>
<dbReference type="CDD" id="cd04727">
    <property type="entry name" value="pdxS"/>
    <property type="match status" value="1"/>
</dbReference>
<dbReference type="FunFam" id="3.20.20.70:FF:000001">
    <property type="entry name" value="Pyridoxine biosynthesis protein PDX1"/>
    <property type="match status" value="1"/>
</dbReference>
<dbReference type="Gene3D" id="3.20.20.70">
    <property type="entry name" value="Aldolase class I"/>
    <property type="match status" value="1"/>
</dbReference>
<dbReference type="HAMAP" id="MF_01824">
    <property type="entry name" value="PdxS"/>
    <property type="match status" value="1"/>
</dbReference>
<dbReference type="InterPro" id="IPR013785">
    <property type="entry name" value="Aldolase_TIM"/>
</dbReference>
<dbReference type="InterPro" id="IPR001852">
    <property type="entry name" value="PdxS/SNZ"/>
</dbReference>
<dbReference type="InterPro" id="IPR033755">
    <property type="entry name" value="PdxS/SNZ_N"/>
</dbReference>
<dbReference type="InterPro" id="IPR011060">
    <property type="entry name" value="RibuloseP-bd_barrel"/>
</dbReference>
<dbReference type="NCBIfam" id="NF003215">
    <property type="entry name" value="PRK04180.1"/>
    <property type="match status" value="1"/>
</dbReference>
<dbReference type="PANTHER" id="PTHR31829">
    <property type="entry name" value="PYRIDOXAL 5'-PHOSPHATE SYNTHASE SUBUNIT SNZ1-RELATED"/>
    <property type="match status" value="1"/>
</dbReference>
<dbReference type="PANTHER" id="PTHR31829:SF0">
    <property type="entry name" value="PYRIDOXAL 5'-PHOSPHATE SYNTHASE SUBUNIT SNZ1-RELATED"/>
    <property type="match status" value="1"/>
</dbReference>
<dbReference type="Pfam" id="PF01680">
    <property type="entry name" value="SOR_SNZ"/>
    <property type="match status" value="1"/>
</dbReference>
<dbReference type="PIRSF" id="PIRSF029271">
    <property type="entry name" value="Pdx1"/>
    <property type="match status" value="1"/>
</dbReference>
<dbReference type="SUPFAM" id="SSF51366">
    <property type="entry name" value="Ribulose-phoshate binding barrel"/>
    <property type="match status" value="1"/>
</dbReference>
<dbReference type="PROSITE" id="PS01235">
    <property type="entry name" value="PDXS_SNZ_1"/>
    <property type="match status" value="1"/>
</dbReference>
<dbReference type="PROSITE" id="PS51129">
    <property type="entry name" value="PDXS_SNZ_2"/>
    <property type="match status" value="1"/>
</dbReference>
<organism>
    <name type="scientific">Hyperthermus butylicus (strain DSM 5456 / JCM 9403 / PLM1-5)</name>
    <dbReference type="NCBI Taxonomy" id="415426"/>
    <lineage>
        <taxon>Archaea</taxon>
        <taxon>Thermoproteota</taxon>
        <taxon>Thermoprotei</taxon>
        <taxon>Desulfurococcales</taxon>
        <taxon>Pyrodictiaceae</taxon>
        <taxon>Hyperthermus</taxon>
    </lineage>
</organism>
<sequence length="335" mass="36866">MKLIDSYAVLEKIRDLIYSLLEARDRAMENGLEVIPVRTATPLVRYGFISMLKGGVVMDVTNEQQAEIAEDAGAVGVMVLDKLPYDVRKAGGVARTADLNVIRAVMETITIPVSAKCRIGHYWEAKLLEEIGVDLIDESEVLTPTDEKAHIWKWEFRVPFVNGARSLPEALRRIWEGASMIRTKGEAGTGNVAEAVRHMKAVNRDIAVLRGYYKAGDIEAIRLYAKSNNVPFELALLTARLGRLPVVNFAAGGIATPADAALMMWLGADGVFVGSGIFKSRDPEQRAQAIVLATTYWDDPETVAEAQSMVSERNAMPGIDITRLKPEELLQIRGE</sequence>
<name>PDXS_HYPBU</name>
<protein>
    <recommendedName>
        <fullName evidence="1">Pyridoxal 5'-phosphate synthase subunit PdxS</fullName>
        <shortName evidence="1">PLP synthase subunit PdxS</shortName>
        <ecNumber evidence="1">4.3.3.6</ecNumber>
    </recommendedName>
    <alternativeName>
        <fullName evidence="1">Pdx1</fullName>
    </alternativeName>
</protein>
<comment type="function">
    <text evidence="1">Catalyzes the formation of pyridoxal 5'-phosphate from ribose 5-phosphate (RBP), glyceraldehyde 3-phosphate (G3P) and ammonia. The ammonia is provided by the PdxT subunit. Can also use ribulose 5-phosphate and dihydroxyacetone phosphate as substrates, resulting from enzyme-catalyzed isomerization of RBP and G3P, respectively.</text>
</comment>
<comment type="catalytic activity">
    <reaction evidence="1">
        <text>aldehydo-D-ribose 5-phosphate + D-glyceraldehyde 3-phosphate + L-glutamine = pyridoxal 5'-phosphate + L-glutamate + phosphate + 3 H2O + H(+)</text>
        <dbReference type="Rhea" id="RHEA:31507"/>
        <dbReference type="ChEBI" id="CHEBI:15377"/>
        <dbReference type="ChEBI" id="CHEBI:15378"/>
        <dbReference type="ChEBI" id="CHEBI:29985"/>
        <dbReference type="ChEBI" id="CHEBI:43474"/>
        <dbReference type="ChEBI" id="CHEBI:58273"/>
        <dbReference type="ChEBI" id="CHEBI:58359"/>
        <dbReference type="ChEBI" id="CHEBI:59776"/>
        <dbReference type="ChEBI" id="CHEBI:597326"/>
        <dbReference type="EC" id="4.3.3.6"/>
    </reaction>
</comment>
<comment type="pathway">
    <text evidence="1">Cofactor biosynthesis; pyridoxal 5'-phosphate biosynthesis.</text>
</comment>
<comment type="subunit">
    <text evidence="1">In the presence of PdxT, forms a dodecamer of heterodimers.</text>
</comment>
<comment type="similarity">
    <text evidence="1">Belongs to the PdxS/SNZ family.</text>
</comment>
<accession>A2BLL5</accession>
<keyword id="KW-0456">Lyase</keyword>
<keyword id="KW-0663">Pyridoxal phosphate</keyword>
<keyword id="KW-1185">Reference proteome</keyword>
<keyword id="KW-0704">Schiff base</keyword>